<dbReference type="EMBL" id="AL391737">
    <property type="protein sequence ID" value="CAD24885.1"/>
    <property type="molecule type" value="Genomic_DNA"/>
</dbReference>
<dbReference type="EMBL" id="AL391737">
    <property type="protein sequence ID" value="CAD25019.1"/>
    <property type="molecule type" value="Genomic_DNA"/>
</dbReference>
<dbReference type="EMBL" id="AL590448">
    <property type="protein sequence ID" value="CAD26311.1"/>
    <property type="molecule type" value="Genomic_DNA"/>
</dbReference>
<dbReference type="RefSeq" id="NP_001402101.1">
    <property type="nucleotide sequence ID" value="NM_001415195.1"/>
</dbReference>
<dbReference type="RefSeq" id="NP_597135.1">
    <property type="nucleotide sequence ID" value="NM_001041744.1"/>
</dbReference>
<dbReference type="RefSeq" id="XP_965850.1">
    <property type="nucleotide sequence ID" value="XM_960757.1"/>
</dbReference>
<dbReference type="RefSeq" id="XP_965984.1">
    <property type="nucleotide sequence ID" value="XM_960891.1"/>
</dbReference>
<dbReference type="SMR" id="Q8ST53"/>
<dbReference type="STRING" id="284813.Q8ST53"/>
<dbReference type="GeneID" id="859557"/>
<dbReference type="GeneID" id="860186"/>
<dbReference type="KEGG" id="ecu:ECU08_0060"/>
<dbReference type="VEuPathDB" id="MicrosporidiaDB:ECU01_0130"/>
<dbReference type="VEuPathDB" id="MicrosporidiaDB:ECU01_1480"/>
<dbReference type="VEuPathDB" id="MicrosporidiaDB:ECU08_0060"/>
<dbReference type="HOGENOM" id="CLU_756563_0_0_1"/>
<dbReference type="InParanoid" id="Q8ST53"/>
<dbReference type="OrthoDB" id="2200041at2759"/>
<dbReference type="Proteomes" id="UP000000819">
    <property type="component" value="Chromosome I"/>
</dbReference>
<dbReference type="Proteomes" id="UP000000819">
    <property type="component" value="Chromosome VIII"/>
</dbReference>
<dbReference type="InterPro" id="IPR022115">
    <property type="entry name" value="DUF3654"/>
</dbReference>
<dbReference type="Pfam" id="PF12376">
    <property type="entry name" value="DUF3654"/>
    <property type="match status" value="1"/>
</dbReference>
<keyword id="KW-1185">Reference proteome</keyword>
<protein>
    <recommendedName>
        <fullName>UPF0329 protein ECU01_0130/ECU01_1480/ECU08_0060</fullName>
    </recommendedName>
</protein>
<organism>
    <name type="scientific">Encephalitozoon cuniculi (strain GB-M1)</name>
    <name type="common">Microsporidian parasite</name>
    <dbReference type="NCBI Taxonomy" id="284813"/>
    <lineage>
        <taxon>Eukaryota</taxon>
        <taxon>Fungi</taxon>
        <taxon>Fungi incertae sedis</taxon>
        <taxon>Microsporidia</taxon>
        <taxon>Unikaryonidae</taxon>
        <taxon>Encephalitozoon</taxon>
    </lineage>
</organism>
<reference key="1">
    <citation type="journal article" date="2001" name="Genome Res.">
        <title>Sequence and analysis of chromosome I of the amitochondriate intracellular parasite Encephalitozoon cuniculi (Microspora).</title>
        <authorList>
            <person name="Peyret P."/>
            <person name="Katinka M.D."/>
            <person name="Duprat S."/>
            <person name="Duffieux F."/>
            <person name="Barbe V."/>
            <person name="Barbazanges M."/>
            <person name="Weissenbach J."/>
            <person name="Saurin W."/>
            <person name="Vivares C.P."/>
        </authorList>
    </citation>
    <scope>NUCLEOTIDE SEQUENCE [LARGE SCALE GENOMIC DNA]</scope>
    <source>
        <strain>GB-M1</strain>
    </source>
</reference>
<reference key="2">
    <citation type="journal article" date="2001" name="Nature">
        <title>Genome sequence and gene compaction of the eukaryote parasite Encephalitozoon cuniculi.</title>
        <authorList>
            <person name="Katinka M.D."/>
            <person name="Duprat S."/>
            <person name="Cornillot E."/>
            <person name="Metenier G."/>
            <person name="Thomarat F."/>
            <person name="Prensier G."/>
            <person name="Barbe V."/>
            <person name="Peyretaillade E."/>
            <person name="Brottier P."/>
            <person name="Wincker P."/>
            <person name="Delbac F."/>
            <person name="El Alaoui H."/>
            <person name="Peyret P."/>
            <person name="Saurin W."/>
            <person name="Gouy M."/>
            <person name="Weissenbach J."/>
            <person name="Vivares C.P."/>
        </authorList>
    </citation>
    <scope>NUCLEOTIDE SEQUENCE [LARGE SCALE GENOMIC DNA]</scope>
    <source>
        <strain>GB-M1</strain>
    </source>
</reference>
<proteinExistence type="inferred from homology"/>
<name>Y113_ENCCU</name>
<feature type="chain" id="PRO_0000223148" description="UPF0329 protein ECU01_0130/ECU01_1480/ECU08_0060">
    <location>
        <begin position="1"/>
        <end position="366"/>
    </location>
</feature>
<feature type="region of interest" description="Disordered" evidence="1">
    <location>
        <begin position="325"/>
        <end position="366"/>
    </location>
</feature>
<gene>
    <name type="ordered locus">ECU01_0130</name>
</gene>
<gene>
    <name type="ordered locus">ECU01_1480</name>
</gene>
<gene>
    <name type="ordered locus">ECU08_0060</name>
</gene>
<sequence>MGVLAACVLGLLGGLHGSRVEETEEMEMMKEMHEKALDCRFDRSKMEEMERSLERTVGFDTKVLIPVIFHGSKVVASPVTRYWEIEKEERRYTERVIKLLPGLAWHLMVCVYVEGCGDWISDLTHKVFSATSFWRPDLVALYKNGKKRDGMKFVDLVVEVFRRNRCMVGRFGDSLARLAEARLQRISGSLSPGERKKEEEMLWKIKEYGERLCTEKRQEEIVKAQKIMCDACAYIWGRESDRRSFLLEAYSKHLCLRMVDPSVGVEGLLAHCMGHSKLIRTYEEHQVDVAGELVLQVFLGNKDIDDESINNAVREVRERKEAERIRKEEKRIRKEEERAKNEEELLRMVESEEGKSGEGEEGCRRG</sequence>
<accession>Q8ST53</accession>
<comment type="similarity">
    <text evidence="2">Belongs to the UPF0329 family.</text>
</comment>
<evidence type="ECO:0000256" key="1">
    <source>
        <dbReference type="SAM" id="MobiDB-lite"/>
    </source>
</evidence>
<evidence type="ECO:0000305" key="2"/>